<sequence length="356" mass="39311">MSTVTITDLARENVRNLTPYQSARRLGGNGDVWLNANEYPTAVEFQLTQQTLNRYPECQPKAVIENYAQYAGVKPEQVLVSCGADEGIELLIRAFCEPGKDAILYCPPTYGMYSVSAETIGVECRTVPTLENWQLDLQGISDKLDGVKVVYVCSPNNPTGQLINPQDFRTLLELTRGKAIVVADEAYIEFCPQASLAGWLAEYPHLAILRTLSKAFALAGLRCGFTLANEEVINLLMKVIAPYPLSTPVADIAAQALSPQGIVAMRERVAQIIAEREYLIAALKEISCVEQVFDSETNYILARFKASSAVFKSLWDQGIILRDQNKQPSLSGCLRITVGTREESQRVIDALRAEQV</sequence>
<name>HIS8_SHIDS</name>
<gene>
    <name evidence="1" type="primary">hisC</name>
    <name type="ordered locus">SDY_2220</name>
</gene>
<dbReference type="EC" id="2.6.1.9" evidence="1"/>
<dbReference type="EMBL" id="CP000034">
    <property type="protein sequence ID" value="ABB62305.1"/>
    <property type="molecule type" value="Genomic_DNA"/>
</dbReference>
<dbReference type="RefSeq" id="WP_000108929.1">
    <property type="nucleotide sequence ID" value="NC_007606.1"/>
</dbReference>
<dbReference type="RefSeq" id="YP_403796.1">
    <property type="nucleotide sequence ID" value="NC_007606.1"/>
</dbReference>
<dbReference type="SMR" id="Q32EF0"/>
<dbReference type="STRING" id="300267.SDY_2220"/>
<dbReference type="EnsemblBacteria" id="ABB62305">
    <property type="protein sequence ID" value="ABB62305"/>
    <property type="gene ID" value="SDY_2220"/>
</dbReference>
<dbReference type="KEGG" id="sdy:SDY_2220"/>
<dbReference type="PATRIC" id="fig|300267.13.peg.2684"/>
<dbReference type="HOGENOM" id="CLU_017584_3_1_6"/>
<dbReference type="UniPathway" id="UPA00031">
    <property type="reaction ID" value="UER00012"/>
</dbReference>
<dbReference type="Proteomes" id="UP000002716">
    <property type="component" value="Chromosome"/>
</dbReference>
<dbReference type="GO" id="GO:0004400">
    <property type="term" value="F:histidinol-phosphate transaminase activity"/>
    <property type="evidence" value="ECO:0007669"/>
    <property type="project" value="UniProtKB-UniRule"/>
</dbReference>
<dbReference type="GO" id="GO:0030170">
    <property type="term" value="F:pyridoxal phosphate binding"/>
    <property type="evidence" value="ECO:0007669"/>
    <property type="project" value="InterPro"/>
</dbReference>
<dbReference type="GO" id="GO:0000105">
    <property type="term" value="P:L-histidine biosynthetic process"/>
    <property type="evidence" value="ECO:0007669"/>
    <property type="project" value="UniProtKB-UniRule"/>
</dbReference>
<dbReference type="CDD" id="cd00609">
    <property type="entry name" value="AAT_like"/>
    <property type="match status" value="1"/>
</dbReference>
<dbReference type="FunFam" id="3.40.640.10:FF:000032">
    <property type="entry name" value="Histidinol-phosphate aminotransferase"/>
    <property type="match status" value="1"/>
</dbReference>
<dbReference type="FunFam" id="3.90.1150.10:FF:000042">
    <property type="entry name" value="Histidinol-phosphate aminotransferase"/>
    <property type="match status" value="1"/>
</dbReference>
<dbReference type="Gene3D" id="3.90.1150.10">
    <property type="entry name" value="Aspartate Aminotransferase, domain 1"/>
    <property type="match status" value="1"/>
</dbReference>
<dbReference type="Gene3D" id="3.40.640.10">
    <property type="entry name" value="Type I PLP-dependent aspartate aminotransferase-like (Major domain)"/>
    <property type="match status" value="1"/>
</dbReference>
<dbReference type="HAMAP" id="MF_01023">
    <property type="entry name" value="HisC_aminotrans_2"/>
    <property type="match status" value="1"/>
</dbReference>
<dbReference type="InterPro" id="IPR001917">
    <property type="entry name" value="Aminotrans_II_pyridoxalP_BS"/>
</dbReference>
<dbReference type="InterPro" id="IPR004839">
    <property type="entry name" value="Aminotransferase_I/II_large"/>
</dbReference>
<dbReference type="InterPro" id="IPR005861">
    <property type="entry name" value="HisP_aminotrans"/>
</dbReference>
<dbReference type="InterPro" id="IPR015424">
    <property type="entry name" value="PyrdxlP-dep_Trfase"/>
</dbReference>
<dbReference type="InterPro" id="IPR015421">
    <property type="entry name" value="PyrdxlP-dep_Trfase_major"/>
</dbReference>
<dbReference type="InterPro" id="IPR015422">
    <property type="entry name" value="PyrdxlP-dep_Trfase_small"/>
</dbReference>
<dbReference type="NCBIfam" id="TIGR01141">
    <property type="entry name" value="hisC"/>
    <property type="match status" value="1"/>
</dbReference>
<dbReference type="PANTHER" id="PTHR42885:SF2">
    <property type="entry name" value="HISTIDINOL-PHOSPHATE AMINOTRANSFERASE"/>
    <property type="match status" value="1"/>
</dbReference>
<dbReference type="PANTHER" id="PTHR42885">
    <property type="entry name" value="HISTIDINOL-PHOSPHATE AMINOTRANSFERASE-RELATED"/>
    <property type="match status" value="1"/>
</dbReference>
<dbReference type="Pfam" id="PF00155">
    <property type="entry name" value="Aminotran_1_2"/>
    <property type="match status" value="1"/>
</dbReference>
<dbReference type="SUPFAM" id="SSF53383">
    <property type="entry name" value="PLP-dependent transferases"/>
    <property type="match status" value="1"/>
</dbReference>
<dbReference type="PROSITE" id="PS00599">
    <property type="entry name" value="AA_TRANSFER_CLASS_2"/>
    <property type="match status" value="1"/>
</dbReference>
<protein>
    <recommendedName>
        <fullName evidence="1">Histidinol-phosphate aminotransferase</fullName>
        <ecNumber evidence="1">2.6.1.9</ecNumber>
    </recommendedName>
    <alternativeName>
        <fullName evidence="1">Imidazole acetol-phosphate transaminase</fullName>
    </alternativeName>
</protein>
<evidence type="ECO:0000255" key="1">
    <source>
        <dbReference type="HAMAP-Rule" id="MF_01023"/>
    </source>
</evidence>
<proteinExistence type="inferred from homology"/>
<comment type="catalytic activity">
    <reaction evidence="1">
        <text>L-histidinol phosphate + 2-oxoglutarate = 3-(imidazol-4-yl)-2-oxopropyl phosphate + L-glutamate</text>
        <dbReference type="Rhea" id="RHEA:23744"/>
        <dbReference type="ChEBI" id="CHEBI:16810"/>
        <dbReference type="ChEBI" id="CHEBI:29985"/>
        <dbReference type="ChEBI" id="CHEBI:57766"/>
        <dbReference type="ChEBI" id="CHEBI:57980"/>
        <dbReference type="EC" id="2.6.1.9"/>
    </reaction>
</comment>
<comment type="cofactor">
    <cofactor evidence="1">
        <name>pyridoxal 5'-phosphate</name>
        <dbReference type="ChEBI" id="CHEBI:597326"/>
    </cofactor>
</comment>
<comment type="pathway">
    <text evidence="1">Amino-acid biosynthesis; L-histidine biosynthesis; L-histidine from 5-phospho-alpha-D-ribose 1-diphosphate: step 7/9.</text>
</comment>
<comment type="subunit">
    <text evidence="1">Homodimer.</text>
</comment>
<comment type="similarity">
    <text evidence="1">Belongs to the class-II pyridoxal-phosphate-dependent aminotransferase family. Histidinol-phosphate aminotransferase subfamily.</text>
</comment>
<organism>
    <name type="scientific">Shigella dysenteriae serotype 1 (strain Sd197)</name>
    <dbReference type="NCBI Taxonomy" id="300267"/>
    <lineage>
        <taxon>Bacteria</taxon>
        <taxon>Pseudomonadati</taxon>
        <taxon>Pseudomonadota</taxon>
        <taxon>Gammaproteobacteria</taxon>
        <taxon>Enterobacterales</taxon>
        <taxon>Enterobacteriaceae</taxon>
        <taxon>Shigella</taxon>
    </lineage>
</organism>
<reference key="1">
    <citation type="journal article" date="2005" name="Nucleic Acids Res.">
        <title>Genome dynamics and diversity of Shigella species, the etiologic agents of bacillary dysentery.</title>
        <authorList>
            <person name="Yang F."/>
            <person name="Yang J."/>
            <person name="Zhang X."/>
            <person name="Chen L."/>
            <person name="Jiang Y."/>
            <person name="Yan Y."/>
            <person name="Tang X."/>
            <person name="Wang J."/>
            <person name="Xiong Z."/>
            <person name="Dong J."/>
            <person name="Xue Y."/>
            <person name="Zhu Y."/>
            <person name="Xu X."/>
            <person name="Sun L."/>
            <person name="Chen S."/>
            <person name="Nie H."/>
            <person name="Peng J."/>
            <person name="Xu J."/>
            <person name="Wang Y."/>
            <person name="Yuan Z."/>
            <person name="Wen Y."/>
            <person name="Yao Z."/>
            <person name="Shen Y."/>
            <person name="Qiang B."/>
            <person name="Hou Y."/>
            <person name="Yu J."/>
            <person name="Jin Q."/>
        </authorList>
    </citation>
    <scope>NUCLEOTIDE SEQUENCE [LARGE SCALE GENOMIC DNA]</scope>
    <source>
        <strain>Sd197</strain>
    </source>
</reference>
<accession>Q32EF0</accession>
<feature type="chain" id="PRO_0000153447" description="Histidinol-phosphate aminotransferase">
    <location>
        <begin position="1"/>
        <end position="356"/>
    </location>
</feature>
<feature type="modified residue" description="N6-(pyridoxal phosphate)lysine" evidence="1">
    <location>
        <position position="214"/>
    </location>
</feature>
<keyword id="KW-0028">Amino-acid biosynthesis</keyword>
<keyword id="KW-0032">Aminotransferase</keyword>
<keyword id="KW-0368">Histidine biosynthesis</keyword>
<keyword id="KW-0663">Pyridoxal phosphate</keyword>
<keyword id="KW-1185">Reference proteome</keyword>
<keyword id="KW-0808">Transferase</keyword>